<comment type="subcellular location">
    <subcellularLocation>
        <location evidence="4">Mitochondrion inner membrane</location>
        <topology evidence="4">Multi-pass membrane protein</topology>
    </subcellularLocation>
</comment>
<comment type="miscellaneous">
    <text evidence="3">Present with 1050 molecules/cell in log phase SD medium.</text>
</comment>
<comment type="similarity">
    <text evidence="4">Belongs to the mitochondrial carrier (TC 2.A.29) family.</text>
</comment>
<dbReference type="EMBL" id="X78993">
    <property type="protein sequence ID" value="CAA55607.1"/>
    <property type="molecule type" value="Genomic_DNA"/>
</dbReference>
<dbReference type="EMBL" id="Z35973">
    <property type="protein sequence ID" value="CAA85059.1"/>
    <property type="molecule type" value="Genomic_DNA"/>
</dbReference>
<dbReference type="EMBL" id="AY693055">
    <property type="protein sequence ID" value="AAT93074.1"/>
    <property type="molecule type" value="Genomic_DNA"/>
</dbReference>
<dbReference type="EMBL" id="BK006936">
    <property type="protein sequence ID" value="DAA07223.1"/>
    <property type="molecule type" value="Genomic_DNA"/>
</dbReference>
<dbReference type="PIR" id="S48269">
    <property type="entry name" value="S48269"/>
</dbReference>
<dbReference type="RefSeq" id="NP_009662.3">
    <property type="nucleotide sequence ID" value="NM_001178452.3"/>
</dbReference>
<dbReference type="SMR" id="P38087"/>
<dbReference type="BioGRID" id="32808">
    <property type="interactions" value="84"/>
</dbReference>
<dbReference type="FunCoup" id="P38087">
    <property type="interactions" value="301"/>
</dbReference>
<dbReference type="IntAct" id="P38087">
    <property type="interactions" value="6"/>
</dbReference>
<dbReference type="STRING" id="4932.YBR104W"/>
<dbReference type="TCDB" id="2.A.29.8.11">
    <property type="family name" value="the mitochondrial carrier (mc) family"/>
</dbReference>
<dbReference type="PaxDb" id="4932-YBR104W"/>
<dbReference type="PeptideAtlas" id="P38087"/>
<dbReference type="EnsemblFungi" id="YBR104W_mRNA">
    <property type="protein sequence ID" value="YBR104W"/>
    <property type="gene ID" value="YBR104W"/>
</dbReference>
<dbReference type="GeneID" id="852401"/>
<dbReference type="KEGG" id="sce:YBR104W"/>
<dbReference type="AGR" id="SGD:S000000308"/>
<dbReference type="SGD" id="S000000308">
    <property type="gene designation" value="YMC2"/>
</dbReference>
<dbReference type="VEuPathDB" id="FungiDB:YBR104W"/>
<dbReference type="eggNOG" id="KOG0758">
    <property type="taxonomic scope" value="Eukaryota"/>
</dbReference>
<dbReference type="GeneTree" id="ENSGT00940000176446"/>
<dbReference type="HOGENOM" id="CLU_015166_16_2_1"/>
<dbReference type="InParanoid" id="P38087"/>
<dbReference type="OMA" id="HICRLRY"/>
<dbReference type="OrthoDB" id="409586at2759"/>
<dbReference type="BioCyc" id="YEAST:G3O-29066-MONOMER"/>
<dbReference type="Reactome" id="R-SCE-70635">
    <property type="pathway name" value="Urea cycle"/>
</dbReference>
<dbReference type="BioGRID-ORCS" id="852401">
    <property type="hits" value="4 hits in 10 CRISPR screens"/>
</dbReference>
<dbReference type="PRO" id="PR:P38087"/>
<dbReference type="Proteomes" id="UP000002311">
    <property type="component" value="Chromosome II"/>
</dbReference>
<dbReference type="RNAct" id="P38087">
    <property type="molecule type" value="protein"/>
</dbReference>
<dbReference type="GO" id="GO:0005743">
    <property type="term" value="C:mitochondrial inner membrane"/>
    <property type="evidence" value="ECO:0007669"/>
    <property type="project" value="UniProtKB-SubCell"/>
</dbReference>
<dbReference type="GO" id="GO:0005739">
    <property type="term" value="C:mitochondrion"/>
    <property type="evidence" value="ECO:0000314"/>
    <property type="project" value="SGD"/>
</dbReference>
<dbReference type="GO" id="GO:0015187">
    <property type="term" value="F:glycine transmembrane transporter activity"/>
    <property type="evidence" value="ECO:0000318"/>
    <property type="project" value="GO_Central"/>
</dbReference>
<dbReference type="GO" id="GO:0005342">
    <property type="term" value="F:organic acid transmembrane transporter activity"/>
    <property type="evidence" value="ECO:0000316"/>
    <property type="project" value="SGD"/>
</dbReference>
<dbReference type="GO" id="GO:1990575">
    <property type="term" value="P:mitochondrial L-ornithine transmembrane transport"/>
    <property type="evidence" value="ECO:0000318"/>
    <property type="project" value="GO_Central"/>
</dbReference>
<dbReference type="GO" id="GO:0006839">
    <property type="term" value="P:mitochondrial transport"/>
    <property type="evidence" value="ECO:0000316"/>
    <property type="project" value="SGD"/>
</dbReference>
<dbReference type="GO" id="GO:0055085">
    <property type="term" value="P:transmembrane transport"/>
    <property type="evidence" value="ECO:0000316"/>
    <property type="project" value="SGD"/>
</dbReference>
<dbReference type="FunFam" id="1.50.40.10:FF:000086">
    <property type="entry name" value="Mitochondrial carrier protein"/>
    <property type="match status" value="1"/>
</dbReference>
<dbReference type="FunFam" id="1.50.40.10:FF:000158">
    <property type="entry name" value="Mitochondrial carrier protein"/>
    <property type="match status" value="1"/>
</dbReference>
<dbReference type="Gene3D" id="1.50.40.10">
    <property type="entry name" value="Mitochondrial carrier domain"/>
    <property type="match status" value="2"/>
</dbReference>
<dbReference type="InterPro" id="IPR050567">
    <property type="entry name" value="Mitochondrial_Carrier"/>
</dbReference>
<dbReference type="InterPro" id="IPR018108">
    <property type="entry name" value="Mitochondrial_sb/sol_carrier"/>
</dbReference>
<dbReference type="InterPro" id="IPR023395">
    <property type="entry name" value="Mt_carrier_dom_sf"/>
</dbReference>
<dbReference type="PANTHER" id="PTHR45624:SF51">
    <property type="entry name" value="CARRIER PROTEIN YMC2, MITOCHONDRIAL-RELATED"/>
    <property type="match status" value="1"/>
</dbReference>
<dbReference type="PANTHER" id="PTHR45624">
    <property type="entry name" value="MITOCHONDRIAL BASIC AMINO ACIDS TRANSPORTER-RELATED"/>
    <property type="match status" value="1"/>
</dbReference>
<dbReference type="Pfam" id="PF00153">
    <property type="entry name" value="Mito_carr"/>
    <property type="match status" value="3"/>
</dbReference>
<dbReference type="SUPFAM" id="SSF103506">
    <property type="entry name" value="Mitochondrial carrier"/>
    <property type="match status" value="1"/>
</dbReference>
<dbReference type="PROSITE" id="PS50920">
    <property type="entry name" value="SOLCAR"/>
    <property type="match status" value="3"/>
</dbReference>
<evidence type="ECO:0000255" key="1"/>
<evidence type="ECO:0000256" key="2">
    <source>
        <dbReference type="SAM" id="MobiDB-lite"/>
    </source>
</evidence>
<evidence type="ECO:0000269" key="3">
    <source>
    </source>
</evidence>
<evidence type="ECO:0000305" key="4"/>
<feature type="transit peptide" description="Mitochondrion" evidence="1">
    <location>
        <begin position="1"/>
        <end position="33"/>
    </location>
</feature>
<feature type="chain" id="PRO_0000019266" description="Carrier protein YMC2, mitochondrial">
    <location>
        <begin position="34"/>
        <end position="329"/>
    </location>
</feature>
<feature type="transmembrane region" description="Helical; Name=1" evidence="1">
    <location>
        <begin position="38"/>
        <end position="58"/>
    </location>
</feature>
<feature type="transmembrane region" description="Helical; Name=2" evidence="1">
    <location>
        <begin position="84"/>
        <end position="104"/>
    </location>
</feature>
<feature type="transmembrane region" description="Helical; Name=3" evidence="1">
    <location>
        <begin position="140"/>
        <end position="160"/>
    </location>
</feature>
<feature type="transmembrane region" description="Helical; Name=5" evidence="1">
    <location>
        <begin position="205"/>
        <end position="225"/>
    </location>
</feature>
<feature type="transmembrane region" description="Helical; Name=6" evidence="1">
    <location>
        <begin position="243"/>
        <end position="263"/>
    </location>
</feature>
<feature type="transmembrane region" description="Helical; Name=1" evidence="1">
    <location>
        <begin position="297"/>
        <end position="318"/>
    </location>
</feature>
<feature type="repeat" description="Solcar 1">
    <location>
        <begin position="34"/>
        <end position="115"/>
    </location>
</feature>
<feature type="repeat" description="Solcar 2">
    <location>
        <begin position="143"/>
        <end position="226"/>
    </location>
</feature>
<feature type="repeat" description="Solcar 3">
    <location>
        <begin position="238"/>
        <end position="325"/>
    </location>
</feature>
<feature type="region of interest" description="Disordered" evidence="2">
    <location>
        <begin position="1"/>
        <end position="27"/>
    </location>
</feature>
<sequence>MSEEFPTPQLLDELEDQQKVTTPNEKRELSSNRVLKDIFAGTIGGIAQVLVGQPFDTTKVRLQTATTRTTTLEVLRNLVKNEGVFAFYKGALTPLLGVGICVSVQFGVNEAMKRFFQNYNASKNPNMSSQDVDLSRSNTLPLSQYYVCGLTGGVVNSFLASPIEQIRIRLQTQTSNGGDREFKGPWDCIKKLKAQGGLMRGLFPTMIRAGHGLGTYFLVYEALVAREIGTGLTRNEIPPWKLCLFGAFSGTMLWLTVYPLDVVKSIIQNDDLRKPKYKNSISYVAKTIYAKEGIRAFFKGFGPTMVRSAPVNGATFLTFELVMRFLGEE</sequence>
<name>YMC2_YEAST</name>
<proteinExistence type="evidence at protein level"/>
<reference key="1">
    <citation type="journal article" date="1994" name="Yeast">
        <title>Analysis of a 70 kb region on the right arm of yeast chromosome II.</title>
        <authorList>
            <person name="Mannhaupt G."/>
            <person name="Stucka R."/>
            <person name="Ehnle S."/>
            <person name="Vetter I."/>
            <person name="Feldmann H."/>
        </authorList>
    </citation>
    <scope>NUCLEOTIDE SEQUENCE [GENOMIC DNA]</scope>
    <source>
        <strain>ATCC 204508 / S288c</strain>
    </source>
</reference>
<reference key="2">
    <citation type="journal article" date="1994" name="EMBO J.">
        <title>Complete DNA sequence of yeast chromosome II.</title>
        <authorList>
            <person name="Feldmann H."/>
            <person name="Aigle M."/>
            <person name="Aljinovic G."/>
            <person name="Andre B."/>
            <person name="Baclet M.C."/>
            <person name="Barthe C."/>
            <person name="Baur A."/>
            <person name="Becam A.-M."/>
            <person name="Biteau N."/>
            <person name="Boles E."/>
            <person name="Brandt T."/>
            <person name="Brendel M."/>
            <person name="Brueckner M."/>
            <person name="Bussereau F."/>
            <person name="Christiansen C."/>
            <person name="Contreras R."/>
            <person name="Crouzet M."/>
            <person name="Cziepluch C."/>
            <person name="Demolis N."/>
            <person name="Delaveau T."/>
            <person name="Doignon F."/>
            <person name="Domdey H."/>
            <person name="Duesterhus S."/>
            <person name="Dubois E."/>
            <person name="Dujon B."/>
            <person name="El Bakkoury M."/>
            <person name="Entian K.-D."/>
            <person name="Feuermann M."/>
            <person name="Fiers W."/>
            <person name="Fobo G.M."/>
            <person name="Fritz C."/>
            <person name="Gassenhuber J."/>
            <person name="Glansdorff N."/>
            <person name="Goffeau A."/>
            <person name="Grivell L.A."/>
            <person name="de Haan M."/>
            <person name="Hein C."/>
            <person name="Herbert C.J."/>
            <person name="Hollenberg C.P."/>
            <person name="Holmstroem K."/>
            <person name="Jacq C."/>
            <person name="Jacquet M."/>
            <person name="Jauniaux J.-C."/>
            <person name="Jonniaux J.-L."/>
            <person name="Kallesoee T."/>
            <person name="Kiesau P."/>
            <person name="Kirchrath L."/>
            <person name="Koetter P."/>
            <person name="Korol S."/>
            <person name="Liebl S."/>
            <person name="Logghe M."/>
            <person name="Lohan A.J.E."/>
            <person name="Louis E.J."/>
            <person name="Li Z.Y."/>
            <person name="Maat M.J."/>
            <person name="Mallet L."/>
            <person name="Mannhaupt G."/>
            <person name="Messenguy F."/>
            <person name="Miosga T."/>
            <person name="Molemans F."/>
            <person name="Mueller S."/>
            <person name="Nasr F."/>
            <person name="Obermaier B."/>
            <person name="Perea J."/>
            <person name="Pierard A."/>
            <person name="Piravandi E."/>
            <person name="Pohl F.M."/>
            <person name="Pohl T.M."/>
            <person name="Potier S."/>
            <person name="Proft M."/>
            <person name="Purnelle B."/>
            <person name="Ramezani Rad M."/>
            <person name="Rieger M."/>
            <person name="Rose M."/>
            <person name="Schaaff-Gerstenschlaeger I."/>
            <person name="Scherens B."/>
            <person name="Schwarzlose C."/>
            <person name="Skala J."/>
            <person name="Slonimski P.P."/>
            <person name="Smits P.H.M."/>
            <person name="Souciet J.-L."/>
            <person name="Steensma H.Y."/>
            <person name="Stucka R."/>
            <person name="Urrestarazu L.A."/>
            <person name="van der Aart Q.J.M."/>
            <person name="Van Dyck L."/>
            <person name="Vassarotti A."/>
            <person name="Vetter I."/>
            <person name="Vierendeels F."/>
            <person name="Vissers S."/>
            <person name="Wagner G."/>
            <person name="de Wergifosse P."/>
            <person name="Wolfe K.H."/>
            <person name="Zagulski M."/>
            <person name="Zimmermann F.K."/>
            <person name="Mewes H.-W."/>
            <person name="Kleine K."/>
        </authorList>
    </citation>
    <scope>NUCLEOTIDE SEQUENCE [LARGE SCALE GENOMIC DNA]</scope>
    <source>
        <strain>ATCC 204508 / S288c</strain>
    </source>
</reference>
<reference key="3">
    <citation type="journal article" date="2014" name="G3 (Bethesda)">
        <title>The reference genome sequence of Saccharomyces cerevisiae: Then and now.</title>
        <authorList>
            <person name="Engel S.R."/>
            <person name="Dietrich F.S."/>
            <person name="Fisk D.G."/>
            <person name="Binkley G."/>
            <person name="Balakrishnan R."/>
            <person name="Costanzo M.C."/>
            <person name="Dwight S.S."/>
            <person name="Hitz B.C."/>
            <person name="Karra K."/>
            <person name="Nash R.S."/>
            <person name="Weng S."/>
            <person name="Wong E.D."/>
            <person name="Lloyd P."/>
            <person name="Skrzypek M.S."/>
            <person name="Miyasato S.R."/>
            <person name="Simison M."/>
            <person name="Cherry J.M."/>
        </authorList>
    </citation>
    <scope>GENOME REANNOTATION</scope>
    <source>
        <strain>ATCC 204508 / S288c</strain>
    </source>
</reference>
<reference key="4">
    <citation type="journal article" date="2007" name="Genome Res.">
        <title>Approaching a complete repository of sequence-verified protein-encoding clones for Saccharomyces cerevisiae.</title>
        <authorList>
            <person name="Hu Y."/>
            <person name="Rolfs A."/>
            <person name="Bhullar B."/>
            <person name="Murthy T.V.S."/>
            <person name="Zhu C."/>
            <person name="Berger M.F."/>
            <person name="Camargo A.A."/>
            <person name="Kelley F."/>
            <person name="McCarron S."/>
            <person name="Jepson D."/>
            <person name="Richardson A."/>
            <person name="Raphael J."/>
            <person name="Moreira D."/>
            <person name="Taycher E."/>
            <person name="Zuo D."/>
            <person name="Mohr S."/>
            <person name="Kane M.F."/>
            <person name="Williamson J."/>
            <person name="Simpson A.J.G."/>
            <person name="Bulyk M.L."/>
            <person name="Harlow E."/>
            <person name="Marsischky G."/>
            <person name="Kolodner R.D."/>
            <person name="LaBaer J."/>
        </authorList>
    </citation>
    <scope>NUCLEOTIDE SEQUENCE [GENOMIC DNA]</scope>
    <source>
        <strain>ATCC 204508 / S288c</strain>
    </source>
</reference>
<reference key="5">
    <citation type="journal article" date="2003" name="Nature">
        <title>Global analysis of protein expression in yeast.</title>
        <authorList>
            <person name="Ghaemmaghami S."/>
            <person name="Huh W.-K."/>
            <person name="Bower K."/>
            <person name="Howson R.W."/>
            <person name="Belle A."/>
            <person name="Dephoure N."/>
            <person name="O'Shea E.K."/>
            <person name="Weissman J.S."/>
        </authorList>
    </citation>
    <scope>LEVEL OF PROTEIN EXPRESSION [LARGE SCALE ANALYSIS]</scope>
</reference>
<organism>
    <name type="scientific">Saccharomyces cerevisiae (strain ATCC 204508 / S288c)</name>
    <name type="common">Baker's yeast</name>
    <dbReference type="NCBI Taxonomy" id="559292"/>
    <lineage>
        <taxon>Eukaryota</taxon>
        <taxon>Fungi</taxon>
        <taxon>Dikarya</taxon>
        <taxon>Ascomycota</taxon>
        <taxon>Saccharomycotina</taxon>
        <taxon>Saccharomycetes</taxon>
        <taxon>Saccharomycetales</taxon>
        <taxon>Saccharomycetaceae</taxon>
        <taxon>Saccharomyces</taxon>
    </lineage>
</organism>
<keyword id="KW-0472">Membrane</keyword>
<keyword id="KW-0496">Mitochondrion</keyword>
<keyword id="KW-0999">Mitochondrion inner membrane</keyword>
<keyword id="KW-1185">Reference proteome</keyword>
<keyword id="KW-0677">Repeat</keyword>
<keyword id="KW-0809">Transit peptide</keyword>
<keyword id="KW-0812">Transmembrane</keyword>
<keyword id="KW-1133">Transmembrane helix</keyword>
<keyword id="KW-0813">Transport</keyword>
<gene>
    <name type="primary">YMC2</name>
    <name type="ordered locus">YBR104W</name>
    <name type="ORF">YBR0833</name>
</gene>
<protein>
    <recommendedName>
        <fullName>Carrier protein YMC2, mitochondrial</fullName>
    </recommendedName>
</protein>
<accession>P38087</accession>
<accession>D6VQA3</accession>